<feature type="chain" id="PRO_1000085345" description="Chaperone modulatory protein CbpM">
    <location>
        <begin position="1"/>
        <end position="101"/>
    </location>
</feature>
<proteinExistence type="inferred from homology"/>
<sequence length="101" mass="11512">MANVTVTFTITEFCLHTGISEEELNEIVGLGVVEPREIQETTWVFDDHAAIVVQRAVRLRHELALDWPGIAVALTLMDDIAHLKQENRLLRQRLSRFVAHP</sequence>
<comment type="function">
    <text evidence="1">Interacts with CbpA and inhibits both the DnaJ-like co-chaperone activity and the DNA binding activity of CbpA. Together with CbpA, modulates the activity of the DnaK chaperone system. Does not inhibit the co-chaperone activity of DnaJ.</text>
</comment>
<comment type="similarity">
    <text evidence="1">Belongs to the CbpM family.</text>
</comment>
<dbReference type="EMBL" id="CP000946">
    <property type="protein sequence ID" value="ACA78227.1"/>
    <property type="molecule type" value="Genomic_DNA"/>
</dbReference>
<dbReference type="RefSeq" id="WP_000024560.1">
    <property type="nucleotide sequence ID" value="NZ_MTFT01000050.1"/>
</dbReference>
<dbReference type="SMR" id="B1IV98"/>
<dbReference type="GeneID" id="93776412"/>
<dbReference type="KEGG" id="ecl:EcolC_2596"/>
<dbReference type="HOGENOM" id="CLU_144710_3_1_6"/>
<dbReference type="FunFam" id="1.10.1660.10:FF:000006">
    <property type="entry name" value="Chaperone modulatory protein CbpM"/>
    <property type="match status" value="1"/>
</dbReference>
<dbReference type="Gene3D" id="1.10.1660.10">
    <property type="match status" value="1"/>
</dbReference>
<dbReference type="HAMAP" id="MF_01155">
    <property type="entry name" value="CbpM"/>
    <property type="match status" value="1"/>
</dbReference>
<dbReference type="InterPro" id="IPR022835">
    <property type="entry name" value="CbpM"/>
</dbReference>
<dbReference type="NCBIfam" id="NF007617">
    <property type="entry name" value="PRK10265.1"/>
    <property type="match status" value="1"/>
</dbReference>
<dbReference type="Pfam" id="PF13591">
    <property type="entry name" value="MerR_2"/>
    <property type="match status" value="1"/>
</dbReference>
<gene>
    <name evidence="1" type="primary">cbpM</name>
    <name type="ordered locus">EcolC_2596</name>
</gene>
<name>CBPM_ECOLC</name>
<reference key="1">
    <citation type="submission" date="2008-02" db="EMBL/GenBank/DDBJ databases">
        <title>Complete sequence of Escherichia coli C str. ATCC 8739.</title>
        <authorList>
            <person name="Copeland A."/>
            <person name="Lucas S."/>
            <person name="Lapidus A."/>
            <person name="Glavina del Rio T."/>
            <person name="Dalin E."/>
            <person name="Tice H."/>
            <person name="Bruce D."/>
            <person name="Goodwin L."/>
            <person name="Pitluck S."/>
            <person name="Kiss H."/>
            <person name="Brettin T."/>
            <person name="Detter J.C."/>
            <person name="Han C."/>
            <person name="Kuske C.R."/>
            <person name="Schmutz J."/>
            <person name="Larimer F."/>
            <person name="Land M."/>
            <person name="Hauser L."/>
            <person name="Kyrpides N."/>
            <person name="Mikhailova N."/>
            <person name="Ingram L."/>
            <person name="Richardson P."/>
        </authorList>
    </citation>
    <scope>NUCLEOTIDE SEQUENCE [LARGE SCALE GENOMIC DNA]</scope>
    <source>
        <strain>ATCC 8739 / DSM 1576 / NBRC 3972 / NCIMB 8545 / WDCM 00012 / Crooks</strain>
    </source>
</reference>
<evidence type="ECO:0000255" key="1">
    <source>
        <dbReference type="HAMAP-Rule" id="MF_01155"/>
    </source>
</evidence>
<accession>B1IV98</accession>
<organism>
    <name type="scientific">Escherichia coli (strain ATCC 8739 / DSM 1576 / NBRC 3972 / NCIMB 8545 / WDCM 00012 / Crooks)</name>
    <dbReference type="NCBI Taxonomy" id="481805"/>
    <lineage>
        <taxon>Bacteria</taxon>
        <taxon>Pseudomonadati</taxon>
        <taxon>Pseudomonadota</taxon>
        <taxon>Gammaproteobacteria</taxon>
        <taxon>Enterobacterales</taxon>
        <taxon>Enterobacteriaceae</taxon>
        <taxon>Escherichia</taxon>
    </lineage>
</organism>
<protein>
    <recommendedName>
        <fullName evidence="1">Chaperone modulatory protein CbpM</fullName>
    </recommendedName>
</protein>